<dbReference type="EMBL" id="L10073">
    <property type="protein sequence ID" value="AAA40616.1"/>
    <property type="molecule type" value="mRNA"/>
</dbReference>
<dbReference type="PIR" id="S38744">
    <property type="entry name" value="S38744"/>
</dbReference>
<dbReference type="RefSeq" id="NP_077371.1">
    <property type="nucleotide sequence ID" value="NM_024395.2"/>
</dbReference>
<dbReference type="SMR" id="P35365"/>
<dbReference type="FunCoup" id="P35365">
    <property type="interactions" value="28"/>
</dbReference>
<dbReference type="STRING" id="10116.ENSRNOP00000003441"/>
<dbReference type="BindingDB" id="P35365"/>
<dbReference type="ChEMBL" id="CHEMBL2619"/>
<dbReference type="DrugCentral" id="P35365"/>
<dbReference type="GlyCosmos" id="P35365">
    <property type="glycosylation" value="1 site, No reported glycans"/>
</dbReference>
<dbReference type="GlyGen" id="P35365">
    <property type="glycosylation" value="3 sites"/>
</dbReference>
<dbReference type="PhosphoSitePlus" id="P35365"/>
<dbReference type="PaxDb" id="10116-ENSRNOP00000003441"/>
<dbReference type="Ensembl" id="ENSRNOT00000003441.6">
    <property type="protein sequence ID" value="ENSRNOP00000003441.3"/>
    <property type="gene ID" value="ENSRNOG00000002549.6"/>
</dbReference>
<dbReference type="GeneID" id="79247"/>
<dbReference type="KEGG" id="rno:79247"/>
<dbReference type="UCSC" id="RGD:62388">
    <property type="organism name" value="rat"/>
</dbReference>
<dbReference type="AGR" id="RGD:62388"/>
<dbReference type="CTD" id="15564"/>
<dbReference type="RGD" id="62388">
    <property type="gene designation" value="Htr5b"/>
</dbReference>
<dbReference type="eggNOG" id="KOG3656">
    <property type="taxonomic scope" value="Eukaryota"/>
</dbReference>
<dbReference type="GeneTree" id="ENSGT01010000222287"/>
<dbReference type="HOGENOM" id="CLU_009579_11_6_1"/>
<dbReference type="InParanoid" id="P35365"/>
<dbReference type="OMA" id="LFGWGEV"/>
<dbReference type="OrthoDB" id="5957871at2759"/>
<dbReference type="PhylomeDB" id="P35365"/>
<dbReference type="TreeFam" id="TF316350"/>
<dbReference type="PRO" id="PR:P35365"/>
<dbReference type="Proteomes" id="UP000002494">
    <property type="component" value="Chromosome 13"/>
</dbReference>
<dbReference type="Bgee" id="ENSRNOG00000002549">
    <property type="expression patterns" value="Expressed in Ammon's horn and 3 other cell types or tissues"/>
</dbReference>
<dbReference type="GO" id="GO:0030425">
    <property type="term" value="C:dendrite"/>
    <property type="evidence" value="ECO:0000318"/>
    <property type="project" value="GO_Central"/>
</dbReference>
<dbReference type="GO" id="GO:0005886">
    <property type="term" value="C:plasma membrane"/>
    <property type="evidence" value="ECO:0000250"/>
    <property type="project" value="UniProtKB"/>
</dbReference>
<dbReference type="GO" id="GO:0045202">
    <property type="term" value="C:synapse"/>
    <property type="evidence" value="ECO:0007669"/>
    <property type="project" value="GOC"/>
</dbReference>
<dbReference type="GO" id="GO:0001664">
    <property type="term" value="F:G protein-coupled receptor binding"/>
    <property type="evidence" value="ECO:0000314"/>
    <property type="project" value="RGD"/>
</dbReference>
<dbReference type="GO" id="GO:0004993">
    <property type="term" value="F:G protein-coupled serotonin receptor activity"/>
    <property type="evidence" value="ECO:0000266"/>
    <property type="project" value="RGD"/>
</dbReference>
<dbReference type="GO" id="GO:0001586">
    <property type="term" value="F:Gi/o-coupled serotonin receptor activity"/>
    <property type="evidence" value="ECO:0000250"/>
    <property type="project" value="UniProtKB"/>
</dbReference>
<dbReference type="GO" id="GO:0030594">
    <property type="term" value="F:neurotransmitter receptor activity"/>
    <property type="evidence" value="ECO:0000318"/>
    <property type="project" value="GO_Central"/>
</dbReference>
<dbReference type="GO" id="GO:0007198">
    <property type="term" value="P:adenylate cyclase-inhibiting serotonin receptor signaling pathway"/>
    <property type="evidence" value="ECO:0000250"/>
    <property type="project" value="UniProtKB"/>
</dbReference>
<dbReference type="GO" id="GO:0007268">
    <property type="term" value="P:chemical synaptic transmission"/>
    <property type="evidence" value="ECO:0000318"/>
    <property type="project" value="GO_Central"/>
</dbReference>
<dbReference type="GO" id="GO:0007187">
    <property type="term" value="P:G protein-coupled receptor signaling pathway, coupled to cyclic nucleotide second messenger"/>
    <property type="evidence" value="ECO:0000318"/>
    <property type="project" value="GO_Central"/>
</dbReference>
<dbReference type="CDD" id="cd15328">
    <property type="entry name" value="7tmA_5-HT5"/>
    <property type="match status" value="1"/>
</dbReference>
<dbReference type="FunFam" id="1.20.1070.10:FF:000089">
    <property type="entry name" value="5-hydroxytryptamine receptor 5A"/>
    <property type="match status" value="1"/>
</dbReference>
<dbReference type="Gene3D" id="1.20.1070.10">
    <property type="entry name" value="Rhodopsin 7-helix transmembrane proteins"/>
    <property type="match status" value="1"/>
</dbReference>
<dbReference type="InterPro" id="IPR000431">
    <property type="entry name" value="5HT5B_rcpt"/>
</dbReference>
<dbReference type="InterPro" id="IPR002231">
    <property type="entry name" value="5HT_rcpt"/>
</dbReference>
<dbReference type="InterPro" id="IPR000276">
    <property type="entry name" value="GPCR_Rhodpsn"/>
</dbReference>
<dbReference type="InterPro" id="IPR017452">
    <property type="entry name" value="GPCR_Rhodpsn_7TM"/>
</dbReference>
<dbReference type="PANTHER" id="PTHR24248:SF202">
    <property type="entry name" value="5-HYDROXYTRYPTAMINE RECEPTOR 5A"/>
    <property type="match status" value="1"/>
</dbReference>
<dbReference type="PANTHER" id="PTHR24248">
    <property type="entry name" value="ADRENERGIC RECEPTOR-RELATED G-PROTEIN COUPLED RECEPTOR"/>
    <property type="match status" value="1"/>
</dbReference>
<dbReference type="Pfam" id="PF00001">
    <property type="entry name" value="7tm_1"/>
    <property type="match status" value="1"/>
</dbReference>
<dbReference type="PRINTS" id="PR00519">
    <property type="entry name" value="5HT5BRECEPTR"/>
</dbReference>
<dbReference type="PRINTS" id="PR01101">
    <property type="entry name" value="5HTRECEPTOR"/>
</dbReference>
<dbReference type="PRINTS" id="PR00237">
    <property type="entry name" value="GPCRRHODOPSN"/>
</dbReference>
<dbReference type="SMART" id="SM01381">
    <property type="entry name" value="7TM_GPCR_Srsx"/>
    <property type="match status" value="1"/>
</dbReference>
<dbReference type="SUPFAM" id="SSF81321">
    <property type="entry name" value="Family A G protein-coupled receptor-like"/>
    <property type="match status" value="1"/>
</dbReference>
<dbReference type="PROSITE" id="PS00237">
    <property type="entry name" value="G_PROTEIN_RECEP_F1_1"/>
    <property type="match status" value="1"/>
</dbReference>
<dbReference type="PROSITE" id="PS50262">
    <property type="entry name" value="G_PROTEIN_RECEP_F1_2"/>
    <property type="match status" value="1"/>
</dbReference>
<feature type="chain" id="PRO_0000068973" description="5-hydroxytryptamine receptor 5B">
    <location>
        <begin position="1"/>
        <end position="370"/>
    </location>
</feature>
<feature type="topological domain" description="Extracellular" evidence="1">
    <location>
        <begin position="1"/>
        <end position="48"/>
    </location>
</feature>
<feature type="transmembrane region" description="Helical; Name=1" evidence="1">
    <location>
        <begin position="49"/>
        <end position="75"/>
    </location>
</feature>
<feature type="topological domain" description="Cytoplasmic" evidence="1">
    <location>
        <begin position="76"/>
        <end position="88"/>
    </location>
</feature>
<feature type="transmembrane region" description="Helical; Name=2" evidence="1">
    <location>
        <begin position="89"/>
        <end position="115"/>
    </location>
</feature>
<feature type="topological domain" description="Extracellular" evidence="1">
    <location>
        <begin position="116"/>
        <end position="127"/>
    </location>
</feature>
<feature type="transmembrane region" description="Helical; Name=3" evidence="1">
    <location>
        <begin position="128"/>
        <end position="150"/>
    </location>
</feature>
<feature type="topological domain" description="Cytoplasmic" evidence="1">
    <location>
        <begin position="151"/>
        <end position="168"/>
    </location>
</feature>
<feature type="transmembrane region" description="Helical; Name=4" evidence="1">
    <location>
        <begin position="169"/>
        <end position="189"/>
    </location>
</feature>
<feature type="topological domain" description="Extracellular" evidence="1">
    <location>
        <begin position="190"/>
        <end position="211"/>
    </location>
</feature>
<feature type="transmembrane region" description="Helical; Name=5" evidence="1">
    <location>
        <begin position="212"/>
        <end position="233"/>
    </location>
</feature>
<feature type="topological domain" description="Cytoplasmic" evidence="1">
    <location>
        <begin position="234"/>
        <end position="300"/>
    </location>
</feature>
<feature type="transmembrane region" description="Helical; Name=6" evidence="1">
    <location>
        <begin position="301"/>
        <end position="325"/>
    </location>
</feature>
<feature type="topological domain" description="Extracellular" evidence="1">
    <location>
        <begin position="326"/>
        <end position="327"/>
    </location>
</feature>
<feature type="transmembrane region" description="Helical; Name=7" evidence="1">
    <location>
        <begin position="328"/>
        <end position="352"/>
    </location>
</feature>
<feature type="topological domain" description="Cytoplasmic" evidence="1">
    <location>
        <begin position="353"/>
        <end position="370"/>
    </location>
</feature>
<feature type="region of interest" description="Disordered" evidence="4">
    <location>
        <begin position="1"/>
        <end position="36"/>
    </location>
</feature>
<feature type="compositionally biased region" description="Low complexity" evidence="4">
    <location>
        <begin position="20"/>
        <end position="36"/>
    </location>
</feature>
<feature type="binding site" evidence="1">
    <location>
        <position position="134"/>
    </location>
    <ligand>
        <name>serotonin</name>
        <dbReference type="ChEBI" id="CHEBI:350546"/>
    </ligand>
</feature>
<feature type="glycosylation site" description="N-linked (GlcNAc...) asparagine" evidence="2">
    <location>
        <position position="5"/>
    </location>
</feature>
<feature type="disulfide bond" evidence="3">
    <location>
        <begin position="127"/>
        <end position="205"/>
    </location>
</feature>
<accession>P35365</accession>
<evidence type="ECO:0000250" key="1">
    <source>
        <dbReference type="UniProtKB" id="P47898"/>
    </source>
</evidence>
<evidence type="ECO:0000255" key="2"/>
<evidence type="ECO:0000255" key="3">
    <source>
        <dbReference type="PROSITE-ProRule" id="PRU00521"/>
    </source>
</evidence>
<evidence type="ECO:0000256" key="4">
    <source>
        <dbReference type="SAM" id="MobiDB-lite"/>
    </source>
</evidence>
<evidence type="ECO:0000269" key="5">
    <source>
    </source>
</evidence>
<evidence type="ECO:0000303" key="6">
    <source>
    </source>
</evidence>
<evidence type="ECO:0000305" key="7"/>
<evidence type="ECO:0000312" key="8">
    <source>
        <dbReference type="RGD" id="62388"/>
    </source>
</evidence>
<organism>
    <name type="scientific">Rattus norvegicus</name>
    <name type="common">Rat</name>
    <dbReference type="NCBI Taxonomy" id="10116"/>
    <lineage>
        <taxon>Eukaryota</taxon>
        <taxon>Metazoa</taxon>
        <taxon>Chordata</taxon>
        <taxon>Craniata</taxon>
        <taxon>Vertebrata</taxon>
        <taxon>Euteleostomi</taxon>
        <taxon>Mammalia</taxon>
        <taxon>Eutheria</taxon>
        <taxon>Euarchontoglires</taxon>
        <taxon>Glires</taxon>
        <taxon>Rodentia</taxon>
        <taxon>Myomorpha</taxon>
        <taxon>Muroidea</taxon>
        <taxon>Muridae</taxon>
        <taxon>Murinae</taxon>
        <taxon>Rattus</taxon>
    </lineage>
</organism>
<comment type="function">
    <text evidence="1 5">G-protein coupled receptor for 5-hydroxytryptamine (serotonin), a biogenic hormone that functions as a neurotransmitter, a hormone and a mitogen (PubMed:7682702). Also functions as a receptor for ergot alkaloid derivatives and other psychoactive substances (By similarity). Ligand binding causes a conformation change that triggers signaling via guanine nucleotide-binding proteins (G proteins) and modulates the activity of downstream effectors (By similarity). Htr5b is coupled to G(i)/G(o) G alpha proteins and mediates inhibitory neurotransmission: signaling inhibits adenylate cyclase activity and activates a phosphatidylinositol-calcium second messenger system that regulates the release of Ca(2+) ions from intracellular stores (By similarity).</text>
</comment>
<comment type="subcellular location">
    <subcellularLocation>
        <location evidence="1">Cell membrane</location>
        <topology evidence="2">Multi-pass membrane protein</topology>
    </subcellularLocation>
</comment>
<comment type="tissue specificity">
    <text evidence="5">Brain; in the CA1 region of hippocampus, the medial habenula, and raphe nuclei.</text>
</comment>
<comment type="similarity">
    <text evidence="3">Belongs to the G-protein coupled receptor 1 family.</text>
</comment>
<protein>
    <recommendedName>
        <fullName evidence="7">5-hydroxytryptamine receptor 5B</fullName>
        <shortName evidence="6">5-HT-5B</shortName>
        <shortName evidence="6">5-HT5B</shortName>
    </recommendedName>
    <alternativeName>
        <fullName evidence="6">MR22</fullName>
    </alternativeName>
    <alternativeName>
        <fullName evidence="6">Serotonin receptor 5B</fullName>
    </alternativeName>
</protein>
<proteinExistence type="evidence at transcript level"/>
<reference key="1">
    <citation type="journal article" date="1993" name="Proc. Natl. Acad. Sci. U.S.A.">
        <title>Two members of a distinct subfamily of 5-hydroxytryptamine receptors differentially expressed in rat brain.</title>
        <authorList>
            <person name="Erlander M.G."/>
            <person name="Lovenberg T.W."/>
            <person name="Baron B.M."/>
            <person name="de Lecea L."/>
            <person name="Danielson P.E."/>
            <person name="Racke M."/>
            <person name="Slone A.L."/>
            <person name="Siegel B.W."/>
            <person name="Foye P.E."/>
            <person name="Cannon K."/>
            <person name="Burns J.E."/>
            <person name="Sutcliffe G.J."/>
        </authorList>
    </citation>
    <scope>NUCLEOTIDE SEQUENCE [MRNA]</scope>
    <scope>FUNCTION</scope>
    <scope>TISSUE SPECIFICITY</scope>
    <source>
        <strain>Sprague-Dawley</strain>
        <tissue>Brain</tissue>
    </source>
</reference>
<reference key="2">
    <citation type="journal article" date="1993" name="FEBS Lett.">
        <title>Cloning and characterization of the rat 5-HT5B receptor. Evidence that the 5-HT5B receptor couples to a G protein in mammalian cell membranes.</title>
        <authorList>
            <person name="Wisden W."/>
            <person name="Parker E.M."/>
            <person name="Mahle C.D."/>
            <person name="Grisel D.A."/>
            <person name="Nowak H.P."/>
            <person name="Yocca F.D."/>
            <person name="Felder C.C."/>
            <person name="Seeburg P.H."/>
            <person name="Voigt M.M."/>
        </authorList>
    </citation>
    <scope>NUCLEOTIDE SEQUENCE [MRNA]</scope>
</reference>
<keyword id="KW-1003">Cell membrane</keyword>
<keyword id="KW-1015">Disulfide bond</keyword>
<keyword id="KW-0297">G-protein coupled receptor</keyword>
<keyword id="KW-0325">Glycoprotein</keyword>
<keyword id="KW-0472">Membrane</keyword>
<keyword id="KW-0675">Receptor</keyword>
<keyword id="KW-1185">Reference proteome</keyword>
<keyword id="KW-0807">Transducer</keyword>
<keyword id="KW-0812">Transmembrane</keyword>
<keyword id="KW-1133">Transmembrane helix</keyword>
<sequence length="370" mass="41122">MEVSNLSGATPGIAFPPGPESCSDSPSSGRSMGSTPGGLILSGREPPFSAFTVLVVTLLVLLIAATFLWNLLVLVTILRVRAFHRVPHNLVASTAVSDVLVAALVMPLSLVSELSAGRRWQLGRSLCHVWISFDVLCCTASIWNVAAIALDRYWTITRHLQYTLRTRRRASALMIAITWALSALIALAPLLFGWGEAYDARLQRCQVSQEPSYAVFSTCGAFYVPLAVVLFVYWKIYKAAKFRFGRRRRAVVPLPATTQAKEAPQESETVFTARCRATVAFQTSGDSWREQKEKRAAMMVGILIGVFVLCWIPFFLTELVSPLCACSLPPIWKSIFLWLGYSNSFFNPLIYTAFNKNYNNAFKSLFTKQR</sequence>
<gene>
    <name evidence="8" type="primary">Htr5b</name>
    <name evidence="6" type="synonym">5ht5b</name>
</gene>
<name>5HT5B_RAT</name>